<feature type="signal peptide" evidence="1">
    <location>
        <begin position="1"/>
        <end position="19"/>
    </location>
</feature>
<feature type="chain" id="PRO_0000032263" description="Prolamin PPROL 14E">
    <location>
        <begin position="20"/>
        <end position="150"/>
    </location>
</feature>
<feature type="modified residue" description="Pyrrolidone carboxylic acid" evidence="1">
    <location>
        <position position="20"/>
    </location>
</feature>
<feature type="sequence conflict" description="In Ref. 2; AAA50422." evidence="2" ref="2">
    <original>LVA</original>
    <variation>GGG</variation>
    <location>
        <begin position="81"/>
        <end position="83"/>
    </location>
</feature>
<feature type="sequence conflict" description="In Ref. 2; AAA50422." evidence="2" ref="2">
    <original>L</original>
    <variation>Q</variation>
    <location>
        <position position="115"/>
    </location>
</feature>
<feature type="sequence conflict" description="In Ref. 2; AAA50421." evidence="2" ref="2">
    <location>
        <begin position="120"/>
        <end position="121"/>
    </location>
</feature>
<accession>Q0DJ45</accession>
<accession>O49179</accession>
<accession>P19085</accession>
<accession>P20696</accession>
<accession>P20697</accession>
<accession>Q5EFA5</accession>
<accession>Q5W6A0</accession>
<accession>Q9S737</accession>
<organism>
    <name type="scientific">Oryza sativa subsp. japonica</name>
    <name type="common">Rice</name>
    <dbReference type="NCBI Taxonomy" id="39947"/>
    <lineage>
        <taxon>Eukaryota</taxon>
        <taxon>Viridiplantae</taxon>
        <taxon>Streptophyta</taxon>
        <taxon>Embryophyta</taxon>
        <taxon>Tracheophyta</taxon>
        <taxon>Spermatophyta</taxon>
        <taxon>Magnoliopsida</taxon>
        <taxon>Liliopsida</taxon>
        <taxon>Poales</taxon>
        <taxon>Poaceae</taxon>
        <taxon>BOP clade</taxon>
        <taxon>Oryzoideae</taxon>
        <taxon>Oryzeae</taxon>
        <taxon>Oryzinae</taxon>
        <taxon>Oryza</taxon>
        <taxon>Oryza sativa</taxon>
    </lineage>
</organism>
<reference key="1">
    <citation type="journal article" date="1988" name="FEBS Lett.">
        <title>Nucleotide and primary sequence of a major rice prolamine.</title>
        <authorList>
            <person name="Kim W.T."/>
            <person name="Okita T.W."/>
        </authorList>
    </citation>
    <scope>NUCLEOTIDE SEQUENCE [MRNA]</scope>
    <source>
        <strain>cv. M201</strain>
    </source>
</reference>
<reference key="2">
    <citation type="journal article" date="1988" name="Plant Physiol.">
        <title>Structure, expression, and heterogeneity of the rice seed prolamines.</title>
        <authorList>
            <person name="Kim W.T."/>
            <person name="Okita T.W."/>
        </authorList>
    </citation>
    <scope>NUCLEOTIDE SEQUENCE [GENOMIC DNA / MRNA]</scope>
    <source>
        <strain>cv. M201</strain>
        <tissue>Seed</tissue>
    </source>
</reference>
<reference key="3">
    <citation type="submission" date="1998-01" db="EMBL/GenBank/DDBJ databases">
        <title>Nucleotide sequence of rice seed prolamine.</title>
        <authorList>
            <person name="Yun C.-H."/>
            <person name="Park J.-H."/>
            <person name="Lee J.-H."/>
            <person name="Eun M.-Y."/>
        </authorList>
    </citation>
    <scope>NUCLEOTIDE SEQUENCE [MRNA]</scope>
</reference>
<reference key="4">
    <citation type="submission" date="1998-07" db="EMBL/GenBank/DDBJ databases">
        <title>Amino acid sequencing and cDNA cloning of major rice seed storage proteins, the 13 kDa prolamins, extrtacted from PB-I protein bodies.</title>
        <authorList>
            <person name="Mitsukawa N."/>
            <person name="Konishi R."/>
            <person name="Kidzu K."/>
            <person name="Ohtsuki K."/>
            <person name="Masumura T."/>
            <person name="Tanaka K."/>
        </authorList>
    </citation>
    <scope>NUCLEOTIDE SEQUENCE [MRNA]</scope>
</reference>
<reference key="5">
    <citation type="submission" date="1999-10" db="EMBL/GenBank/DDBJ databases">
        <title>Nucleotide sequence of a rice (Oryza sativa) prolamin storage protein gene, RP7.</title>
        <authorList>
            <person name="Satya Prasad M."/>
            <person name="Chen C.-S."/>
        </authorList>
    </citation>
    <scope>NUCLEOTIDE SEQUENCE [GENOMIC DNA]</scope>
</reference>
<reference key="6">
    <citation type="submission" date="2006-11" db="EMBL/GenBank/DDBJ databases">
        <title>Molecular cloning of 10kDa prolamin genes in rice seeds.</title>
        <authorList>
            <person name="Yoon U.H."/>
            <person name="Kim Y.H."/>
        </authorList>
    </citation>
    <scope>NUCLEOTIDE SEQUENCE [MRNA]</scope>
    <source>
        <strain>cv. Ilpoombyeo</strain>
    </source>
</reference>
<reference key="7">
    <citation type="journal article" date="2005" name="Mol. Genet. Genomics">
        <title>A fine physical map of the rice chromosome 5.</title>
        <authorList>
            <person name="Cheng C.-H."/>
            <person name="Chung M.C."/>
            <person name="Liu S.-M."/>
            <person name="Chen S.-K."/>
            <person name="Kao F.Y."/>
            <person name="Lin S.-J."/>
            <person name="Hsiao S.-H."/>
            <person name="Tseng I.C."/>
            <person name="Hsing Y.-I.C."/>
            <person name="Wu H.-P."/>
            <person name="Chen C.-S."/>
            <person name="Shaw J.-F."/>
            <person name="Wu J."/>
            <person name="Matsumoto T."/>
            <person name="Sasaki T."/>
            <person name="Chen H.-C."/>
            <person name="Chow T.-Y."/>
        </authorList>
    </citation>
    <scope>NUCLEOTIDE SEQUENCE [LARGE SCALE GENOMIC DNA]</scope>
    <source>
        <strain>cv. Nipponbare</strain>
    </source>
</reference>
<reference key="8">
    <citation type="journal article" date="2005" name="Nature">
        <title>The map-based sequence of the rice genome.</title>
        <authorList>
            <consortium name="International rice genome sequencing project (IRGSP)"/>
        </authorList>
    </citation>
    <scope>NUCLEOTIDE SEQUENCE [LARGE SCALE GENOMIC DNA]</scope>
    <source>
        <strain>cv. Nipponbare</strain>
    </source>
</reference>
<reference key="9">
    <citation type="journal article" date="2008" name="Nucleic Acids Res.">
        <title>The rice annotation project database (RAP-DB): 2008 update.</title>
        <authorList>
            <consortium name="The rice annotation project (RAP)"/>
        </authorList>
    </citation>
    <scope>GENOME REANNOTATION</scope>
    <source>
        <strain>cv. Nipponbare</strain>
    </source>
</reference>
<reference key="10">
    <citation type="journal article" date="2013" name="Rice">
        <title>Improvement of the Oryza sativa Nipponbare reference genome using next generation sequence and optical map data.</title>
        <authorList>
            <person name="Kawahara Y."/>
            <person name="de la Bastide M."/>
            <person name="Hamilton J.P."/>
            <person name="Kanamori H."/>
            <person name="McCombie W.R."/>
            <person name="Ouyang S."/>
            <person name="Schwartz D.C."/>
            <person name="Tanaka T."/>
            <person name="Wu J."/>
            <person name="Zhou S."/>
            <person name="Childs K.L."/>
            <person name="Davidson R.M."/>
            <person name="Lin H."/>
            <person name="Quesada-Ocampo L."/>
            <person name="Vaillancourt B."/>
            <person name="Sakai H."/>
            <person name="Lee S.S."/>
            <person name="Kim J."/>
            <person name="Numa H."/>
            <person name="Itoh T."/>
            <person name="Buell C.R."/>
            <person name="Matsumoto T."/>
        </authorList>
    </citation>
    <scope>GENOME REANNOTATION</scope>
    <source>
        <strain>cv. Nipponbare</strain>
    </source>
</reference>
<reference key="11">
    <citation type="journal article" date="2007" name="Plant J.">
        <title>Small cysteine-rich peptides resembling antimicrobial peptides have been under-predicted in plants.</title>
        <authorList>
            <person name="Silverstein K.A.T."/>
            <person name="Moskal W.A. Jr."/>
            <person name="Wu H.C."/>
            <person name="Underwood B.A."/>
            <person name="Graham M.A."/>
            <person name="Town C.D."/>
            <person name="VandenBosch K.A."/>
        </authorList>
    </citation>
    <scope>GENE FAMILY</scope>
    <scope>NOMENCLATURE</scope>
</reference>
<dbReference type="EMBL" id="Y00747">
    <property type="protein sequence ID" value="CAA68715.1"/>
    <property type="status" value="ALT_SEQ"/>
    <property type="molecule type" value="mRNA"/>
</dbReference>
<dbReference type="EMBL" id="M23743">
    <property type="protein sequence ID" value="AAA50424.1"/>
    <property type="status" value="ALT_SEQ"/>
    <property type="molecule type" value="mRNA"/>
</dbReference>
<dbReference type="EMBL" id="M23744">
    <property type="protein sequence ID" value="AAA50421.1"/>
    <property type="molecule type" value="mRNA"/>
</dbReference>
<dbReference type="EMBL" id="M23746">
    <property type="protein sequence ID" value="AAA50422.1"/>
    <property type="molecule type" value="Genomic_DNA"/>
</dbReference>
<dbReference type="EMBL" id="AF042201">
    <property type="protein sequence ID" value="AAB99798.1"/>
    <property type="status" value="ALT_FRAME"/>
    <property type="molecule type" value="mRNA"/>
</dbReference>
<dbReference type="EMBL" id="AB016504">
    <property type="protein sequence ID" value="BAA36698.1"/>
    <property type="molecule type" value="mRNA"/>
</dbReference>
<dbReference type="EMBL" id="AF194115">
    <property type="protein sequence ID" value="AAF05813.1"/>
    <property type="molecule type" value="Genomic_DNA"/>
</dbReference>
<dbReference type="EMBL" id="EF122440">
    <property type="protein sequence ID" value="ABL74527.1"/>
    <property type="molecule type" value="mRNA"/>
</dbReference>
<dbReference type="EMBL" id="EF122446">
    <property type="protein sequence ID" value="ABL74533.1"/>
    <property type="molecule type" value="mRNA"/>
</dbReference>
<dbReference type="EMBL" id="AC137747">
    <property type="protein sequence ID" value="AAV43995.1"/>
    <property type="molecule type" value="Genomic_DNA"/>
</dbReference>
<dbReference type="EMBL" id="AC137747">
    <property type="protein sequence ID" value="AAV43996.1"/>
    <property type="molecule type" value="Genomic_DNA"/>
</dbReference>
<dbReference type="EMBL" id="AC137747">
    <property type="protein sequence ID" value="AAV43997.1"/>
    <property type="molecule type" value="Genomic_DNA"/>
</dbReference>
<dbReference type="EMBL" id="AP008211">
    <property type="protein sequence ID" value="BAF17127.1"/>
    <property type="molecule type" value="Genomic_DNA"/>
</dbReference>
<dbReference type="EMBL" id="AP014961">
    <property type="protein sequence ID" value="BAS93414.1"/>
    <property type="molecule type" value="Genomic_DNA"/>
</dbReference>
<dbReference type="EMBL" id="AP014961">
    <property type="protein sequence ID" value="BAS93415.1"/>
    <property type="molecule type" value="Genomic_DNA"/>
</dbReference>
<dbReference type="EMBL" id="AP014961">
    <property type="protein sequence ID" value="BAS93416.1"/>
    <property type="molecule type" value="Genomic_DNA"/>
</dbReference>
<dbReference type="PIR" id="JA0166">
    <property type="entry name" value="JA0166"/>
</dbReference>
<dbReference type="PIR" id="JA0168">
    <property type="entry name" value="JA0168"/>
</dbReference>
<dbReference type="PIR" id="S00557">
    <property type="entry name" value="FWRZP7"/>
</dbReference>
<dbReference type="PIR" id="T02665">
    <property type="entry name" value="T02665"/>
</dbReference>
<dbReference type="FunCoup" id="Q0DJ45">
    <property type="interactions" value="22"/>
</dbReference>
<dbReference type="PaxDb" id="39947-Q0DJ45"/>
<dbReference type="EnsemblPlants" id="Os05t0329100-01">
    <property type="protein sequence ID" value="Os05t0329100-01"/>
    <property type="gene ID" value="Os05g0329100"/>
</dbReference>
<dbReference type="EnsemblPlants" id="Os05t0329100-02">
    <property type="protein sequence ID" value="Os05t0329100-02"/>
    <property type="gene ID" value="Os05g0329100"/>
</dbReference>
<dbReference type="EnsemblPlants" id="Os05t0329300-01">
    <property type="protein sequence ID" value="Os05t0329300-01"/>
    <property type="gene ID" value="Os05g0329300"/>
</dbReference>
<dbReference type="EnsemblPlants" id="Os05t0329300-02">
    <property type="protein sequence ID" value="Os05t0329300-02"/>
    <property type="gene ID" value="Os05g0329300"/>
</dbReference>
<dbReference type="EnsemblPlants" id="Os05t0329350-00">
    <property type="protein sequence ID" value="Os05t0329350-00"/>
    <property type="gene ID" value="Os05g0329350"/>
</dbReference>
<dbReference type="Gramene" id="Os05t0329100-01">
    <property type="protein sequence ID" value="Os05t0329100-01"/>
    <property type="gene ID" value="Os05g0329100"/>
</dbReference>
<dbReference type="Gramene" id="Os05t0329100-02">
    <property type="protein sequence ID" value="Os05t0329100-02"/>
    <property type="gene ID" value="Os05g0329100"/>
</dbReference>
<dbReference type="Gramene" id="Os05t0329300-01">
    <property type="protein sequence ID" value="Os05t0329300-01"/>
    <property type="gene ID" value="Os05g0329300"/>
</dbReference>
<dbReference type="Gramene" id="Os05t0329300-02">
    <property type="protein sequence ID" value="Os05t0329300-02"/>
    <property type="gene ID" value="Os05g0329300"/>
</dbReference>
<dbReference type="Gramene" id="Os05t0329350-00">
    <property type="protein sequence ID" value="Os05t0329350-00"/>
    <property type="gene ID" value="Os05g0329350"/>
</dbReference>
<dbReference type="KEGG" id="dosa:Os05g0329100"/>
<dbReference type="eggNOG" id="ENOG502SIUC">
    <property type="taxonomic scope" value="Eukaryota"/>
</dbReference>
<dbReference type="HOGENOM" id="CLU_081977_1_1_1"/>
<dbReference type="InParanoid" id="Q0DJ45"/>
<dbReference type="Proteomes" id="UP000000763">
    <property type="component" value="Chromosome 5"/>
</dbReference>
<dbReference type="Proteomes" id="UP000059680">
    <property type="component" value="Chromosome 5"/>
</dbReference>
<dbReference type="ExpressionAtlas" id="Q0DJ45">
    <property type="expression patterns" value="baseline"/>
</dbReference>
<dbReference type="GO" id="GO:0033095">
    <property type="term" value="C:aleurone grain"/>
    <property type="evidence" value="ECO:0007669"/>
    <property type="project" value="UniProtKB-SubCell"/>
</dbReference>
<dbReference type="GO" id="GO:0005773">
    <property type="term" value="C:vacuole"/>
    <property type="evidence" value="ECO:0007669"/>
    <property type="project" value="UniProtKB-KW"/>
</dbReference>
<dbReference type="GO" id="GO:0045735">
    <property type="term" value="F:nutrient reservoir activity"/>
    <property type="evidence" value="ECO:0007669"/>
    <property type="project" value="UniProtKB-KW"/>
</dbReference>
<dbReference type="InterPro" id="IPR036312">
    <property type="entry name" value="Bifun_inhib/LTP/seed_sf"/>
</dbReference>
<dbReference type="InterPro" id="IPR016140">
    <property type="entry name" value="Bifunc_inhib/LTP/seed_store"/>
</dbReference>
<dbReference type="InterPro" id="IPR001954">
    <property type="entry name" value="Glia_glutenin"/>
</dbReference>
<dbReference type="PANTHER" id="PTHR33454">
    <property type="entry name" value="PROLAMIN PPROL 14P"/>
    <property type="match status" value="1"/>
</dbReference>
<dbReference type="PANTHER" id="PTHR33454:SF19">
    <property type="entry name" value="PROLAMIN PPROL 14P"/>
    <property type="match status" value="1"/>
</dbReference>
<dbReference type="Pfam" id="PF13016">
    <property type="entry name" value="Gliadin"/>
    <property type="match status" value="1"/>
</dbReference>
<dbReference type="SUPFAM" id="SSF47699">
    <property type="entry name" value="Bifunctional inhibitor/lipid-transfer protein/seed storage 2S albumin"/>
    <property type="match status" value="1"/>
</dbReference>
<keyword id="KW-0873">Pyrrolidone carboxylic acid</keyword>
<keyword id="KW-1185">Reference proteome</keyword>
<keyword id="KW-0708">Seed storage protein</keyword>
<keyword id="KW-0732">Signal</keyword>
<keyword id="KW-0758">Storage protein</keyword>
<keyword id="KW-0926">Vacuole</keyword>
<name>PRO7_ORYSJ</name>
<proteinExistence type="evidence at transcript level"/>
<gene>
    <name type="primary">PROLM7</name>
    <name evidence="6" type="ordered locus">Os05g0329100</name>
    <name evidence="2" type="ordered locus">LOC_Os05g26377</name>
    <name evidence="3" type="ORF">OSJNBa0051L16.16</name>
</gene>
<gene>
    <name type="primary">PROLM8</name>
    <name evidence="7" type="ordered locus">Os05g0329300</name>
    <name evidence="2" type="ordered locus">LOC_Os05g26386</name>
    <name evidence="4" type="ORF">OSJNBa0051L16.17</name>
</gene>
<gene>
    <name type="primary">PROLM9</name>
    <name evidence="8" type="ordered locus">Os05g0329350</name>
    <name type="ordered locus">LOC_Os05g26400</name>
    <name evidence="5" type="ORF">OSJNBa0051L16.18</name>
</gene>
<comment type="function">
    <text>Seed storage protein; serves as a source of nitrogen, carbon and sulfur for the young developing seedling.</text>
</comment>
<comment type="subcellular location">
    <subcellularLocation>
        <location>Vacuole</location>
        <location>Aleurone grain</location>
    </subcellularLocation>
    <text>In rice, prolamin accumulates as a type I protein body which originates directly from the endoplasmic reticulum.</text>
</comment>
<comment type="miscellaneous">
    <text>Lacks significant tandem repetitive sequences.</text>
</comment>
<comment type="similarity">
    <text evidence="2">Belongs to the prolamin family.</text>
</comment>
<comment type="sequence caution" evidence="2">
    <conflict type="frameshift">
        <sequence resource="EMBL-CDS" id="AAA50424"/>
    </conflict>
</comment>
<comment type="sequence caution" evidence="2">
    <conflict type="miscellaneous discrepancy">
        <sequence resource="EMBL-CDS" id="AAA50424"/>
    </conflict>
    <text>Sequencing errors.</text>
</comment>
<comment type="sequence caution" evidence="2">
    <conflict type="frameshift">
        <sequence resource="EMBL-CDS" id="AAB99798"/>
    </conflict>
</comment>
<comment type="sequence caution" evidence="2">
    <conflict type="frameshift">
        <sequence resource="EMBL-CDS" id="CAA68715"/>
    </conflict>
</comment>
<comment type="sequence caution" evidence="2">
    <conflict type="miscellaneous discrepancy">
        <sequence resource="EMBL-CDS" id="CAA68715"/>
    </conflict>
    <text>Sequencing errors.</text>
</comment>
<sequence length="150" mass="16869">MKIIFVFALLAIAACSASAQFDVLGQSYRQYQLQSPVLLQQQVLSPYNEFVRQQYGIAASPFLQSAAFQLRNNQVWQQLALVAQQSHYQDINIVQAIAQQLQLQQFGDLYFDRNLAQAQALLAFNVPSRYGIYPRYYGAPSTITTLGGVL</sequence>
<protein>
    <recommendedName>
        <fullName>Prolamin PPROL 14E</fullName>
    </recommendedName>
    <alternativeName>
        <fullName>Prolamin PPROL 14</fullName>
    </alternativeName>
    <alternativeName>
        <fullName>Prolamin PPROL 4A</fullName>
    </alternativeName>
    <alternativeName>
        <fullName>Prolamin PPROL 7</fullName>
    </alternativeName>
</protein>
<evidence type="ECO:0000255" key="1"/>
<evidence type="ECO:0000305" key="2"/>
<evidence type="ECO:0000312" key="3">
    <source>
        <dbReference type="EMBL" id="AAV43995.1"/>
    </source>
</evidence>
<evidence type="ECO:0000312" key="4">
    <source>
        <dbReference type="EMBL" id="AAV43996.1"/>
    </source>
</evidence>
<evidence type="ECO:0000312" key="5">
    <source>
        <dbReference type="EMBL" id="AAV43997.1"/>
    </source>
</evidence>
<evidence type="ECO:0000312" key="6">
    <source>
        <dbReference type="EMBL" id="BAS93414.1"/>
    </source>
</evidence>
<evidence type="ECO:0000312" key="7">
    <source>
        <dbReference type="EMBL" id="BAS93415.1"/>
    </source>
</evidence>
<evidence type="ECO:0000312" key="8">
    <source>
        <dbReference type="EMBL" id="BAS93416.1"/>
    </source>
</evidence>